<keyword id="KW-0004">4Fe-4S</keyword>
<keyword id="KW-0067">ATP-binding</keyword>
<keyword id="KW-0077">Bacteriochlorophyll biosynthesis</keyword>
<keyword id="KW-0149">Chlorophyll biosynthesis</keyword>
<keyword id="KW-0408">Iron</keyword>
<keyword id="KW-0411">Iron-sulfur</keyword>
<keyword id="KW-0460">Magnesium</keyword>
<keyword id="KW-0479">Metal-binding</keyword>
<keyword id="KW-0547">Nucleotide-binding</keyword>
<keyword id="KW-0560">Oxidoreductase</keyword>
<keyword id="KW-0602">Photosynthesis</keyword>
<comment type="function">
    <text evidence="1">Component of the dark-operative protochlorophyllide reductase (DPOR) that uses Mg-ATP and reduced ferredoxin to reduce ring D of protochlorophyllide (Pchlide) to form chlorophyllide a (Chlide). This reaction is light-independent. The L component serves as a unique electron donor to the NB-component of the complex, and binds Mg-ATP.</text>
</comment>
<comment type="catalytic activity">
    <reaction evidence="1">
        <text>chlorophyllide a + oxidized 2[4Fe-4S]-[ferredoxin] + 2 ADP + 2 phosphate = protochlorophyllide a + reduced 2[4Fe-4S]-[ferredoxin] + 2 ATP + 2 H2O</text>
        <dbReference type="Rhea" id="RHEA:28202"/>
        <dbReference type="Rhea" id="RHEA-COMP:10002"/>
        <dbReference type="Rhea" id="RHEA-COMP:10004"/>
        <dbReference type="ChEBI" id="CHEBI:15377"/>
        <dbReference type="ChEBI" id="CHEBI:30616"/>
        <dbReference type="ChEBI" id="CHEBI:33722"/>
        <dbReference type="ChEBI" id="CHEBI:33723"/>
        <dbReference type="ChEBI" id="CHEBI:43474"/>
        <dbReference type="ChEBI" id="CHEBI:83348"/>
        <dbReference type="ChEBI" id="CHEBI:83350"/>
        <dbReference type="ChEBI" id="CHEBI:456216"/>
        <dbReference type="EC" id="1.3.7.7"/>
    </reaction>
</comment>
<comment type="cofactor">
    <cofactor evidence="1">
        <name>[4Fe-4S] cluster</name>
        <dbReference type="ChEBI" id="CHEBI:49883"/>
    </cofactor>
    <text evidence="1">Binds 1 [4Fe-4S] cluster per dimer.</text>
</comment>
<comment type="pathway">
    <text evidence="1">Porphyrin-containing compound metabolism; bacteriochlorophyll biosynthesis (light-independent).</text>
</comment>
<comment type="subunit">
    <text evidence="1">Homodimer. Protochlorophyllide reductase is composed of three subunits; BchL, BchN and BchB.</text>
</comment>
<comment type="similarity">
    <text evidence="1">Belongs to the NifH/BchL/ChlL family.</text>
</comment>
<protein>
    <recommendedName>
        <fullName evidence="1">Light-independent protochlorophyllide reductase iron-sulfur ATP-binding protein</fullName>
        <shortName evidence="1">DPOR subunit L</shortName>
        <shortName evidence="1">LI-POR subunit L</shortName>
        <ecNumber evidence="1">1.3.7.7</ecNumber>
    </recommendedName>
</protein>
<sequence>MNILTDPAKLKTAGCADTNASKCSEGDGEGSVQVQLDPNLKIGTAKVFSIYGKGGIGKSTTSSNLSVAFSKLGKRVLQIGCDPKHDSTFTLTKRLVPTVIDVLESVNFHSEELRPEDFVFEGYNGVMCLEAGGPPAGTGCGGYVVGQTVKLLKEHHLLEDTDVVIFDVLGDVVCGGFAAPLQHSERAMIVAANDFDSIFAANRIAAAIAAKSKNYGVRLGGIIANRSRETDQIDKFGERTGIRRIAHLPDLDVIRKSRLKKMTLFEMDHTDEILAVQQEYLRLATEMLEGKEPPIDGKPLKDRDIFDLLGFD</sequence>
<feature type="chain" id="PRO_0000324070" description="Light-independent protochlorophyllide reductase iron-sulfur ATP-binding protein">
    <location>
        <begin position="1"/>
        <end position="312"/>
    </location>
</feature>
<feature type="binding site" evidence="1">
    <location>
        <begin position="55"/>
        <end position="60"/>
    </location>
    <ligand>
        <name>ATP</name>
        <dbReference type="ChEBI" id="CHEBI:30616"/>
    </ligand>
</feature>
<feature type="binding site" evidence="1">
    <location>
        <position position="59"/>
    </location>
    <ligand>
        <name>Mg(2+)</name>
        <dbReference type="ChEBI" id="CHEBI:18420"/>
    </ligand>
</feature>
<feature type="binding site" evidence="1">
    <location>
        <position position="84"/>
    </location>
    <ligand>
        <name>ATP</name>
        <dbReference type="ChEBI" id="CHEBI:30616"/>
    </ligand>
</feature>
<feature type="binding site" evidence="1">
    <location>
        <position position="140"/>
    </location>
    <ligand>
        <name>[4Fe-4S] cluster</name>
        <dbReference type="ChEBI" id="CHEBI:49883"/>
        <note>ligand shared between dimeric partners</note>
    </ligand>
</feature>
<feature type="binding site" evidence="1">
    <location>
        <position position="174"/>
    </location>
    <ligand>
        <name>[4Fe-4S] cluster</name>
        <dbReference type="ChEBI" id="CHEBI:49883"/>
        <note>ligand shared between dimeric partners</note>
    </ligand>
</feature>
<feature type="binding site" evidence="1">
    <location>
        <begin position="225"/>
        <end position="226"/>
    </location>
    <ligand>
        <name>ATP</name>
        <dbReference type="ChEBI" id="CHEBI:30616"/>
    </ligand>
</feature>
<feature type="binding site" evidence="1">
    <location>
        <begin position="249"/>
        <end position="251"/>
    </location>
    <ligand>
        <name>ATP</name>
        <dbReference type="ChEBI" id="CHEBI:30616"/>
    </ligand>
</feature>
<name>BCHL_RHOPB</name>
<gene>
    <name evidence="1" type="primary">bchL</name>
    <name type="ordered locus">RPC_1316</name>
</gene>
<dbReference type="EC" id="1.3.7.7" evidence="1"/>
<dbReference type="EMBL" id="CP000301">
    <property type="protein sequence ID" value="ABD86878.1"/>
    <property type="molecule type" value="Genomic_DNA"/>
</dbReference>
<dbReference type="SMR" id="Q219Q8"/>
<dbReference type="STRING" id="316056.RPC_1316"/>
<dbReference type="KEGG" id="rpc:RPC_1316"/>
<dbReference type="eggNOG" id="COG1348">
    <property type="taxonomic scope" value="Bacteria"/>
</dbReference>
<dbReference type="HOGENOM" id="CLU_059373_2_0_5"/>
<dbReference type="OrthoDB" id="9778641at2"/>
<dbReference type="UniPathway" id="UPA00671"/>
<dbReference type="GO" id="GO:0051539">
    <property type="term" value="F:4 iron, 4 sulfur cluster binding"/>
    <property type="evidence" value="ECO:0007669"/>
    <property type="project" value="UniProtKB-UniRule"/>
</dbReference>
<dbReference type="GO" id="GO:0005524">
    <property type="term" value="F:ATP binding"/>
    <property type="evidence" value="ECO:0007669"/>
    <property type="project" value="UniProtKB-UniRule"/>
</dbReference>
<dbReference type="GO" id="GO:0046872">
    <property type="term" value="F:metal ion binding"/>
    <property type="evidence" value="ECO:0007669"/>
    <property type="project" value="UniProtKB-KW"/>
</dbReference>
<dbReference type="GO" id="GO:0016730">
    <property type="term" value="F:oxidoreductase activity, acting on iron-sulfur proteins as donors"/>
    <property type="evidence" value="ECO:0007669"/>
    <property type="project" value="InterPro"/>
</dbReference>
<dbReference type="GO" id="GO:0016636">
    <property type="term" value="F:oxidoreductase activity, acting on the CH-CH group of donors, iron-sulfur protein as acceptor"/>
    <property type="evidence" value="ECO:0007669"/>
    <property type="project" value="UniProtKB-UniRule"/>
</dbReference>
<dbReference type="GO" id="GO:0036070">
    <property type="term" value="P:light-independent bacteriochlorophyll biosynthetic process"/>
    <property type="evidence" value="ECO:0007669"/>
    <property type="project" value="UniProtKB-UniRule"/>
</dbReference>
<dbReference type="GO" id="GO:0019685">
    <property type="term" value="P:photosynthesis, dark reaction"/>
    <property type="evidence" value="ECO:0007669"/>
    <property type="project" value="InterPro"/>
</dbReference>
<dbReference type="Gene3D" id="3.40.50.300">
    <property type="entry name" value="P-loop containing nucleotide triphosphate hydrolases"/>
    <property type="match status" value="1"/>
</dbReference>
<dbReference type="HAMAP" id="MF_00355">
    <property type="entry name" value="ChlL_BchL"/>
    <property type="match status" value="1"/>
</dbReference>
<dbReference type="InterPro" id="IPR030655">
    <property type="entry name" value="NifH/chlL_CS"/>
</dbReference>
<dbReference type="InterPro" id="IPR000392">
    <property type="entry name" value="NifH/frxC"/>
</dbReference>
<dbReference type="InterPro" id="IPR027417">
    <property type="entry name" value="P-loop_NTPase"/>
</dbReference>
<dbReference type="InterPro" id="IPR005971">
    <property type="entry name" value="Protochlorophyllide_ATP-bd"/>
</dbReference>
<dbReference type="NCBIfam" id="TIGR01281">
    <property type="entry name" value="DPOR_bchL"/>
    <property type="match status" value="1"/>
</dbReference>
<dbReference type="PANTHER" id="PTHR42864">
    <property type="entry name" value="LIGHT-INDEPENDENT PROTOCHLOROPHYLLIDE REDUCTASE IRON-SULFUR ATP-BINDING PROTEIN"/>
    <property type="match status" value="1"/>
</dbReference>
<dbReference type="PANTHER" id="PTHR42864:SF2">
    <property type="entry name" value="LIGHT-INDEPENDENT PROTOCHLOROPHYLLIDE REDUCTASE IRON-SULFUR ATP-BINDING PROTEIN"/>
    <property type="match status" value="1"/>
</dbReference>
<dbReference type="Pfam" id="PF00142">
    <property type="entry name" value="Fer4_NifH"/>
    <property type="match status" value="1"/>
</dbReference>
<dbReference type="PIRSF" id="PIRSF000363">
    <property type="entry name" value="Nitrogenase_iron"/>
    <property type="match status" value="1"/>
</dbReference>
<dbReference type="PRINTS" id="PR00091">
    <property type="entry name" value="NITROGNASEII"/>
</dbReference>
<dbReference type="SUPFAM" id="SSF52540">
    <property type="entry name" value="P-loop containing nucleoside triphosphate hydrolases"/>
    <property type="match status" value="1"/>
</dbReference>
<dbReference type="PROSITE" id="PS00746">
    <property type="entry name" value="NIFH_FRXC_1"/>
    <property type="match status" value="1"/>
</dbReference>
<dbReference type="PROSITE" id="PS00692">
    <property type="entry name" value="NIFH_FRXC_2"/>
    <property type="match status" value="1"/>
</dbReference>
<dbReference type="PROSITE" id="PS51026">
    <property type="entry name" value="NIFH_FRXC_3"/>
    <property type="match status" value="1"/>
</dbReference>
<evidence type="ECO:0000255" key="1">
    <source>
        <dbReference type="HAMAP-Rule" id="MF_00355"/>
    </source>
</evidence>
<reference key="1">
    <citation type="submission" date="2006-03" db="EMBL/GenBank/DDBJ databases">
        <title>Complete sequence of Rhodopseudomonas palustris BisB18.</title>
        <authorList>
            <consortium name="US DOE Joint Genome Institute"/>
            <person name="Copeland A."/>
            <person name="Lucas S."/>
            <person name="Lapidus A."/>
            <person name="Barry K."/>
            <person name="Detter J.C."/>
            <person name="Glavina del Rio T."/>
            <person name="Hammon N."/>
            <person name="Israni S."/>
            <person name="Dalin E."/>
            <person name="Tice H."/>
            <person name="Pitluck S."/>
            <person name="Chain P."/>
            <person name="Malfatti S."/>
            <person name="Shin M."/>
            <person name="Vergez L."/>
            <person name="Schmutz J."/>
            <person name="Larimer F."/>
            <person name="Land M."/>
            <person name="Hauser L."/>
            <person name="Pelletier D.A."/>
            <person name="Kyrpides N."/>
            <person name="Anderson I."/>
            <person name="Oda Y."/>
            <person name="Harwood C.S."/>
            <person name="Richardson P."/>
        </authorList>
    </citation>
    <scope>NUCLEOTIDE SEQUENCE [LARGE SCALE GENOMIC DNA]</scope>
    <source>
        <strain>BisB18</strain>
    </source>
</reference>
<organism>
    <name type="scientific">Rhodopseudomonas palustris (strain BisB18)</name>
    <dbReference type="NCBI Taxonomy" id="316056"/>
    <lineage>
        <taxon>Bacteria</taxon>
        <taxon>Pseudomonadati</taxon>
        <taxon>Pseudomonadota</taxon>
        <taxon>Alphaproteobacteria</taxon>
        <taxon>Hyphomicrobiales</taxon>
        <taxon>Nitrobacteraceae</taxon>
        <taxon>Rhodopseudomonas</taxon>
    </lineage>
</organism>
<accession>Q219Q8</accession>
<proteinExistence type="inferred from homology"/>